<reference key="1">
    <citation type="journal article" date="2004" name="Nat. Genet.">
        <title>Comparison of genome degradation in Paratyphi A and Typhi, human-restricted serovars of Salmonella enterica that cause typhoid.</title>
        <authorList>
            <person name="McClelland M."/>
            <person name="Sanderson K.E."/>
            <person name="Clifton S.W."/>
            <person name="Latreille P."/>
            <person name="Porwollik S."/>
            <person name="Sabo A."/>
            <person name="Meyer R."/>
            <person name="Bieri T."/>
            <person name="Ozersky P."/>
            <person name="McLellan M."/>
            <person name="Harkins C.R."/>
            <person name="Wang C."/>
            <person name="Nguyen C."/>
            <person name="Berghoff A."/>
            <person name="Elliott G."/>
            <person name="Kohlberg S."/>
            <person name="Strong C."/>
            <person name="Du F."/>
            <person name="Carter J."/>
            <person name="Kremizki C."/>
            <person name="Layman D."/>
            <person name="Leonard S."/>
            <person name="Sun H."/>
            <person name="Fulton L."/>
            <person name="Nash W."/>
            <person name="Miner T."/>
            <person name="Minx P."/>
            <person name="Delehaunty K."/>
            <person name="Fronick C."/>
            <person name="Magrini V."/>
            <person name="Nhan M."/>
            <person name="Warren W."/>
            <person name="Florea L."/>
            <person name="Spieth J."/>
            <person name="Wilson R.K."/>
        </authorList>
    </citation>
    <scope>NUCLEOTIDE SEQUENCE [LARGE SCALE GENOMIC DNA]</scope>
    <source>
        <strain>ATCC 9150 / SARB42</strain>
    </source>
</reference>
<gene>
    <name evidence="1" type="primary">rsmC</name>
    <name type="ordered locus">SPA4370</name>
</gene>
<name>RSMC_SALPA</name>
<protein>
    <recommendedName>
        <fullName evidence="1">Ribosomal RNA small subunit methyltransferase C</fullName>
        <ecNumber evidence="1">2.1.1.172</ecNumber>
    </recommendedName>
    <alternativeName>
        <fullName evidence="1">16S rRNA m2G1207 methyltransferase</fullName>
    </alternativeName>
    <alternativeName>
        <fullName evidence="1">rRNA (guanine-N(2)-)-methyltransferase RsmC</fullName>
    </alternativeName>
</protein>
<proteinExistence type="inferred from homology"/>
<keyword id="KW-0963">Cytoplasm</keyword>
<keyword id="KW-0489">Methyltransferase</keyword>
<keyword id="KW-0698">rRNA processing</keyword>
<keyword id="KW-0949">S-adenosyl-L-methionine</keyword>
<keyword id="KW-0808">Transferase</keyword>
<evidence type="ECO:0000255" key="1">
    <source>
        <dbReference type="HAMAP-Rule" id="MF_01862"/>
    </source>
</evidence>
<sequence length="342" mass="37604">MSAFTPASEVLLRHSDDFEQSRILFAGDLQDDLPARFECAASRAYTQQFHHWQALSRQMGDNVRFSLVAQASDVADCDTLIYYWPKNKPEAQFQLMNILSLMSVGSDVFVVGENRSGVRSAEPMLADYAPLNKVDSARRCGLYHGRLEKQPQFSLESWWAEYNIDGLTIKTLPGVFSRDGLDVGSQLLLSTLTPHTKGKVLDVGCGAGVLSAALASHSPKVRLTLCDVSAPAVEASRATLAANGLEGEVFASNVFSEVKGRFDMIISNPPFHDGMQTSLDAAQTLIRGAVRHLNSGGELRIVANAFLPYPKILDETFGFHEVIAQTGRFKVYRTVMTRQAKK</sequence>
<feature type="chain" id="PRO_0000369759" description="Ribosomal RNA small subunit methyltransferase C">
    <location>
        <begin position="1"/>
        <end position="342"/>
    </location>
</feature>
<accession>Q5PK16</accession>
<dbReference type="EC" id="2.1.1.172" evidence="1"/>
<dbReference type="EMBL" id="CP000026">
    <property type="protein sequence ID" value="AAV80093.1"/>
    <property type="molecule type" value="Genomic_DNA"/>
</dbReference>
<dbReference type="RefSeq" id="WP_001272294.1">
    <property type="nucleotide sequence ID" value="NC_006511.1"/>
</dbReference>
<dbReference type="SMR" id="Q5PK16"/>
<dbReference type="KEGG" id="spt:SPA4370"/>
<dbReference type="HOGENOM" id="CLU_049581_0_1_6"/>
<dbReference type="Proteomes" id="UP000008185">
    <property type="component" value="Chromosome"/>
</dbReference>
<dbReference type="GO" id="GO:0005737">
    <property type="term" value="C:cytoplasm"/>
    <property type="evidence" value="ECO:0007669"/>
    <property type="project" value="UniProtKB-SubCell"/>
</dbReference>
<dbReference type="GO" id="GO:0052914">
    <property type="term" value="F:16S rRNA (guanine(1207)-N(2))-methyltransferase activity"/>
    <property type="evidence" value="ECO:0007669"/>
    <property type="project" value="UniProtKB-EC"/>
</dbReference>
<dbReference type="GO" id="GO:0003676">
    <property type="term" value="F:nucleic acid binding"/>
    <property type="evidence" value="ECO:0007669"/>
    <property type="project" value="InterPro"/>
</dbReference>
<dbReference type="CDD" id="cd02440">
    <property type="entry name" value="AdoMet_MTases"/>
    <property type="match status" value="1"/>
</dbReference>
<dbReference type="FunFam" id="3.40.50.150:FF:000058">
    <property type="entry name" value="Ribosomal RNA small subunit methyltransferase C"/>
    <property type="match status" value="1"/>
</dbReference>
<dbReference type="Gene3D" id="3.40.50.150">
    <property type="entry name" value="Vaccinia Virus protein VP39"/>
    <property type="match status" value="2"/>
</dbReference>
<dbReference type="HAMAP" id="MF_01862">
    <property type="entry name" value="16SrRNA_methyltr_C"/>
    <property type="match status" value="1"/>
</dbReference>
<dbReference type="InterPro" id="IPR002052">
    <property type="entry name" value="DNA_methylase_N6_adenine_CS"/>
</dbReference>
<dbReference type="InterPro" id="IPR013675">
    <property type="entry name" value="Mtase_sm_N"/>
</dbReference>
<dbReference type="InterPro" id="IPR023543">
    <property type="entry name" value="rRNA_ssu_MeTfrase_C"/>
</dbReference>
<dbReference type="InterPro" id="IPR046977">
    <property type="entry name" value="RsmC/RlmG"/>
</dbReference>
<dbReference type="InterPro" id="IPR029063">
    <property type="entry name" value="SAM-dependent_MTases_sf"/>
</dbReference>
<dbReference type="InterPro" id="IPR007848">
    <property type="entry name" value="Small_mtfrase_dom"/>
</dbReference>
<dbReference type="NCBIfam" id="NF007023">
    <property type="entry name" value="PRK09489.1"/>
    <property type="match status" value="1"/>
</dbReference>
<dbReference type="PANTHER" id="PTHR47816">
    <property type="entry name" value="RIBOSOMAL RNA SMALL SUBUNIT METHYLTRANSFERASE C"/>
    <property type="match status" value="1"/>
</dbReference>
<dbReference type="PANTHER" id="PTHR47816:SF4">
    <property type="entry name" value="RIBOSOMAL RNA SMALL SUBUNIT METHYLTRANSFERASE C"/>
    <property type="match status" value="1"/>
</dbReference>
<dbReference type="Pfam" id="PF05175">
    <property type="entry name" value="MTS"/>
    <property type="match status" value="1"/>
</dbReference>
<dbReference type="Pfam" id="PF08468">
    <property type="entry name" value="MTS_N"/>
    <property type="match status" value="1"/>
</dbReference>
<dbReference type="SUPFAM" id="SSF53335">
    <property type="entry name" value="S-adenosyl-L-methionine-dependent methyltransferases"/>
    <property type="match status" value="1"/>
</dbReference>
<organism>
    <name type="scientific">Salmonella paratyphi A (strain ATCC 9150 / SARB42)</name>
    <dbReference type="NCBI Taxonomy" id="295319"/>
    <lineage>
        <taxon>Bacteria</taxon>
        <taxon>Pseudomonadati</taxon>
        <taxon>Pseudomonadota</taxon>
        <taxon>Gammaproteobacteria</taxon>
        <taxon>Enterobacterales</taxon>
        <taxon>Enterobacteriaceae</taxon>
        <taxon>Salmonella</taxon>
    </lineage>
</organism>
<comment type="function">
    <text evidence="1">Specifically methylates the guanine in position 1207 of 16S rRNA in the 30S particle.</text>
</comment>
<comment type="catalytic activity">
    <reaction evidence="1">
        <text>guanosine(1207) in 16S rRNA + S-adenosyl-L-methionine = N(2)-methylguanosine(1207) in 16S rRNA + S-adenosyl-L-homocysteine + H(+)</text>
        <dbReference type="Rhea" id="RHEA:42736"/>
        <dbReference type="Rhea" id="RHEA-COMP:10213"/>
        <dbReference type="Rhea" id="RHEA-COMP:10214"/>
        <dbReference type="ChEBI" id="CHEBI:15378"/>
        <dbReference type="ChEBI" id="CHEBI:57856"/>
        <dbReference type="ChEBI" id="CHEBI:59789"/>
        <dbReference type="ChEBI" id="CHEBI:74269"/>
        <dbReference type="ChEBI" id="CHEBI:74481"/>
        <dbReference type="EC" id="2.1.1.172"/>
    </reaction>
</comment>
<comment type="subunit">
    <text evidence="1">Monomer.</text>
</comment>
<comment type="subcellular location">
    <subcellularLocation>
        <location evidence="1">Cytoplasm</location>
    </subcellularLocation>
</comment>
<comment type="similarity">
    <text evidence="1">Belongs to the methyltransferase superfamily. RsmC family.</text>
</comment>